<accession>B3QLF6</accession>
<protein>
    <recommendedName>
        <fullName evidence="1">Small ribosomal subunit protein uS9</fullName>
    </recommendedName>
    <alternativeName>
        <fullName evidence="3">30S ribosomal protein S9</fullName>
    </alternativeName>
</protein>
<proteinExistence type="inferred from homology"/>
<dbReference type="EMBL" id="CP001099">
    <property type="protein sequence ID" value="ACF10846.1"/>
    <property type="molecule type" value="Genomic_DNA"/>
</dbReference>
<dbReference type="RefSeq" id="WP_012501679.1">
    <property type="nucleotide sequence ID" value="NC_011027.1"/>
</dbReference>
<dbReference type="SMR" id="B3QLF6"/>
<dbReference type="STRING" id="517417.Cpar_0424"/>
<dbReference type="KEGG" id="cpc:Cpar_0424"/>
<dbReference type="eggNOG" id="COG0103">
    <property type="taxonomic scope" value="Bacteria"/>
</dbReference>
<dbReference type="HOGENOM" id="CLU_046483_2_1_10"/>
<dbReference type="OrthoDB" id="9803965at2"/>
<dbReference type="Proteomes" id="UP000008811">
    <property type="component" value="Chromosome"/>
</dbReference>
<dbReference type="GO" id="GO:0005737">
    <property type="term" value="C:cytoplasm"/>
    <property type="evidence" value="ECO:0007669"/>
    <property type="project" value="UniProtKB-ARBA"/>
</dbReference>
<dbReference type="GO" id="GO:0015935">
    <property type="term" value="C:small ribosomal subunit"/>
    <property type="evidence" value="ECO:0007669"/>
    <property type="project" value="TreeGrafter"/>
</dbReference>
<dbReference type="GO" id="GO:0003723">
    <property type="term" value="F:RNA binding"/>
    <property type="evidence" value="ECO:0007669"/>
    <property type="project" value="TreeGrafter"/>
</dbReference>
<dbReference type="GO" id="GO:0003735">
    <property type="term" value="F:structural constituent of ribosome"/>
    <property type="evidence" value="ECO:0007669"/>
    <property type="project" value="InterPro"/>
</dbReference>
<dbReference type="GO" id="GO:0006412">
    <property type="term" value="P:translation"/>
    <property type="evidence" value="ECO:0007669"/>
    <property type="project" value="UniProtKB-UniRule"/>
</dbReference>
<dbReference type="FunFam" id="3.30.230.10:FF:000001">
    <property type="entry name" value="30S ribosomal protein S9"/>
    <property type="match status" value="1"/>
</dbReference>
<dbReference type="Gene3D" id="3.30.230.10">
    <property type="match status" value="1"/>
</dbReference>
<dbReference type="HAMAP" id="MF_00532_B">
    <property type="entry name" value="Ribosomal_uS9_B"/>
    <property type="match status" value="1"/>
</dbReference>
<dbReference type="InterPro" id="IPR020568">
    <property type="entry name" value="Ribosomal_Su5_D2-typ_SF"/>
</dbReference>
<dbReference type="InterPro" id="IPR000754">
    <property type="entry name" value="Ribosomal_uS9"/>
</dbReference>
<dbReference type="InterPro" id="IPR023035">
    <property type="entry name" value="Ribosomal_uS9_bac/plastid"/>
</dbReference>
<dbReference type="InterPro" id="IPR020574">
    <property type="entry name" value="Ribosomal_uS9_CS"/>
</dbReference>
<dbReference type="InterPro" id="IPR014721">
    <property type="entry name" value="Ribsml_uS5_D2-typ_fold_subgr"/>
</dbReference>
<dbReference type="NCBIfam" id="NF001099">
    <property type="entry name" value="PRK00132.1"/>
    <property type="match status" value="1"/>
</dbReference>
<dbReference type="PANTHER" id="PTHR21569">
    <property type="entry name" value="RIBOSOMAL PROTEIN S9"/>
    <property type="match status" value="1"/>
</dbReference>
<dbReference type="PANTHER" id="PTHR21569:SF1">
    <property type="entry name" value="SMALL RIBOSOMAL SUBUNIT PROTEIN US9M"/>
    <property type="match status" value="1"/>
</dbReference>
<dbReference type="Pfam" id="PF00380">
    <property type="entry name" value="Ribosomal_S9"/>
    <property type="match status" value="1"/>
</dbReference>
<dbReference type="SUPFAM" id="SSF54211">
    <property type="entry name" value="Ribosomal protein S5 domain 2-like"/>
    <property type="match status" value="1"/>
</dbReference>
<dbReference type="PROSITE" id="PS00360">
    <property type="entry name" value="RIBOSOMAL_S9"/>
    <property type="match status" value="1"/>
</dbReference>
<evidence type="ECO:0000255" key="1">
    <source>
        <dbReference type="HAMAP-Rule" id="MF_00532"/>
    </source>
</evidence>
<evidence type="ECO:0000256" key="2">
    <source>
        <dbReference type="SAM" id="MobiDB-lite"/>
    </source>
</evidence>
<evidence type="ECO:0000305" key="3"/>
<name>RS9_CHLP8</name>
<feature type="chain" id="PRO_1000128101" description="Small ribosomal subunit protein uS9">
    <location>
        <begin position="1"/>
        <end position="129"/>
    </location>
</feature>
<feature type="region of interest" description="Disordered" evidence="2">
    <location>
        <begin position="110"/>
        <end position="129"/>
    </location>
</feature>
<feature type="compositionally biased region" description="Basic residues" evidence="2">
    <location>
        <begin position="114"/>
        <end position="129"/>
    </location>
</feature>
<organism>
    <name type="scientific">Chlorobaculum parvum (strain DSM 263 / NCIMB 8327)</name>
    <name type="common">Chlorobium vibrioforme subsp. thiosulfatophilum</name>
    <dbReference type="NCBI Taxonomy" id="517417"/>
    <lineage>
        <taxon>Bacteria</taxon>
        <taxon>Pseudomonadati</taxon>
        <taxon>Chlorobiota</taxon>
        <taxon>Chlorobiia</taxon>
        <taxon>Chlorobiales</taxon>
        <taxon>Chlorobiaceae</taxon>
        <taxon>Chlorobaculum</taxon>
    </lineage>
</organism>
<sequence>MKEVIDTVGRRKTSVARVFMSPGKGKIVVNKLPVEEYFKDEFKRSQALKPLVTAEKQDEFDIKVNVKGGGLTGQSGAVCLAIARALVEFDESIRPTLRTERLLTRDPRMVERKKYGKKKARKSFQFSKR</sequence>
<gene>
    <name evidence="1" type="primary">rpsI</name>
    <name type="ordered locus">Cpar_0424</name>
</gene>
<comment type="similarity">
    <text evidence="1">Belongs to the universal ribosomal protein uS9 family.</text>
</comment>
<keyword id="KW-0687">Ribonucleoprotein</keyword>
<keyword id="KW-0689">Ribosomal protein</keyword>
<reference key="1">
    <citation type="submission" date="2008-06" db="EMBL/GenBank/DDBJ databases">
        <title>Complete sequence of Chlorobaculum parvum NCIB 8327.</title>
        <authorList>
            <consortium name="US DOE Joint Genome Institute"/>
            <person name="Lucas S."/>
            <person name="Copeland A."/>
            <person name="Lapidus A."/>
            <person name="Glavina del Rio T."/>
            <person name="Dalin E."/>
            <person name="Tice H."/>
            <person name="Bruce D."/>
            <person name="Goodwin L."/>
            <person name="Pitluck S."/>
            <person name="Schmutz J."/>
            <person name="Larimer F."/>
            <person name="Land M."/>
            <person name="Hauser L."/>
            <person name="Kyrpides N."/>
            <person name="Mikhailova N."/>
            <person name="Zhao F."/>
            <person name="Li T."/>
            <person name="Liu Z."/>
            <person name="Overmann J."/>
            <person name="Bryant D.A."/>
            <person name="Richardson P."/>
        </authorList>
    </citation>
    <scope>NUCLEOTIDE SEQUENCE [LARGE SCALE GENOMIC DNA]</scope>
    <source>
        <strain>DSM 263 / NCIMB 8327</strain>
    </source>
</reference>